<feature type="chain" id="PRO_0000141219" description="Ribose-phosphate pyrophosphokinase">
    <location>
        <begin position="1"/>
        <end position="315"/>
    </location>
</feature>
<feature type="active site" evidence="1">
    <location>
        <position position="198"/>
    </location>
</feature>
<feature type="binding site" evidence="1">
    <location>
        <begin position="40"/>
        <end position="42"/>
    </location>
    <ligand>
        <name>ATP</name>
        <dbReference type="ChEBI" id="CHEBI:30616"/>
    </ligand>
</feature>
<feature type="binding site" evidence="1">
    <location>
        <begin position="99"/>
        <end position="100"/>
    </location>
    <ligand>
        <name>ATP</name>
        <dbReference type="ChEBI" id="CHEBI:30616"/>
    </ligand>
</feature>
<feature type="binding site" evidence="1">
    <location>
        <position position="133"/>
    </location>
    <ligand>
        <name>Mg(2+)</name>
        <dbReference type="ChEBI" id="CHEBI:18420"/>
        <label>1</label>
    </ligand>
</feature>
<feature type="binding site" evidence="1">
    <location>
        <position position="175"/>
    </location>
    <ligand>
        <name>Mg(2+)</name>
        <dbReference type="ChEBI" id="CHEBI:18420"/>
        <label>2</label>
    </ligand>
</feature>
<feature type="binding site" evidence="1">
    <location>
        <position position="200"/>
    </location>
    <ligand>
        <name>D-ribose 5-phosphate</name>
        <dbReference type="ChEBI" id="CHEBI:78346"/>
    </ligand>
</feature>
<feature type="binding site" evidence="1">
    <location>
        <position position="224"/>
    </location>
    <ligand>
        <name>D-ribose 5-phosphate</name>
        <dbReference type="ChEBI" id="CHEBI:78346"/>
    </ligand>
</feature>
<feature type="binding site" evidence="1">
    <location>
        <begin position="228"/>
        <end position="232"/>
    </location>
    <ligand>
        <name>D-ribose 5-phosphate</name>
        <dbReference type="ChEBI" id="CHEBI:78346"/>
    </ligand>
</feature>
<gene>
    <name evidence="1" type="primary">prs</name>
    <name type="ordered locus">TM_1628</name>
</gene>
<name>KPRS_THEMA</name>
<comment type="function">
    <text evidence="1">Involved in the biosynthesis of the central metabolite phospho-alpha-D-ribosyl-1-pyrophosphate (PRPP) via the transfer of pyrophosphoryl group from ATP to 1-hydroxyl of ribose-5-phosphate (Rib-5-P).</text>
</comment>
<comment type="catalytic activity">
    <reaction evidence="1">
        <text>D-ribose 5-phosphate + ATP = 5-phospho-alpha-D-ribose 1-diphosphate + AMP + H(+)</text>
        <dbReference type="Rhea" id="RHEA:15609"/>
        <dbReference type="ChEBI" id="CHEBI:15378"/>
        <dbReference type="ChEBI" id="CHEBI:30616"/>
        <dbReference type="ChEBI" id="CHEBI:58017"/>
        <dbReference type="ChEBI" id="CHEBI:78346"/>
        <dbReference type="ChEBI" id="CHEBI:456215"/>
        <dbReference type="EC" id="2.7.6.1"/>
    </reaction>
</comment>
<comment type="cofactor">
    <cofactor evidence="1">
        <name>Mg(2+)</name>
        <dbReference type="ChEBI" id="CHEBI:18420"/>
    </cofactor>
    <text evidence="1">Binds 2 Mg(2+) ions per subunit.</text>
</comment>
<comment type="pathway">
    <text evidence="1">Metabolic intermediate biosynthesis; 5-phospho-alpha-D-ribose 1-diphosphate biosynthesis; 5-phospho-alpha-D-ribose 1-diphosphate from D-ribose 5-phosphate (route I): step 1/1.</text>
</comment>
<comment type="subunit">
    <text evidence="1">Homohexamer.</text>
</comment>
<comment type="subcellular location">
    <subcellularLocation>
        <location evidence="1">Cytoplasm</location>
    </subcellularLocation>
</comment>
<comment type="similarity">
    <text evidence="1">Belongs to the ribose-phosphate pyrophosphokinase family. Class I subfamily.</text>
</comment>
<protein>
    <recommendedName>
        <fullName evidence="1">Ribose-phosphate pyrophosphokinase</fullName>
        <shortName evidence="1">RPPK</shortName>
        <ecNumber evidence="1">2.7.6.1</ecNumber>
    </recommendedName>
    <alternativeName>
        <fullName evidence="1">5-phospho-D-ribosyl alpha-1-diphosphate synthase</fullName>
    </alternativeName>
    <alternativeName>
        <fullName evidence="1">Phosphoribosyl diphosphate synthase</fullName>
    </alternativeName>
    <alternativeName>
        <fullName evidence="1">Phosphoribosyl pyrophosphate synthase</fullName>
        <shortName evidence="1">P-Rib-PP synthase</shortName>
        <shortName evidence="1">PRPP synthase</shortName>
        <shortName evidence="1">PRPPase</shortName>
    </alternativeName>
</protein>
<dbReference type="EC" id="2.7.6.1" evidence="1"/>
<dbReference type="EMBL" id="AE000512">
    <property type="protein sequence ID" value="AAD36695.1"/>
    <property type="molecule type" value="Genomic_DNA"/>
</dbReference>
<dbReference type="PIR" id="D72229">
    <property type="entry name" value="D72229"/>
</dbReference>
<dbReference type="RefSeq" id="NP_229428.1">
    <property type="nucleotide sequence ID" value="NC_000853.1"/>
</dbReference>
<dbReference type="RefSeq" id="WP_004082104.1">
    <property type="nucleotide sequence ID" value="NC_000853.1"/>
</dbReference>
<dbReference type="SMR" id="Q9X1W3"/>
<dbReference type="FunCoup" id="Q9X1W3">
    <property type="interactions" value="431"/>
</dbReference>
<dbReference type="STRING" id="243274.TM_1628"/>
<dbReference type="PaxDb" id="243274-THEMA_06105"/>
<dbReference type="EnsemblBacteria" id="AAD36695">
    <property type="protein sequence ID" value="AAD36695"/>
    <property type="gene ID" value="TM_1628"/>
</dbReference>
<dbReference type="KEGG" id="tma:TM1628"/>
<dbReference type="KEGG" id="tmi:THEMA_06105"/>
<dbReference type="KEGG" id="tmm:Tmari_1637"/>
<dbReference type="KEGG" id="tmw:THMA_1669"/>
<dbReference type="eggNOG" id="COG0462">
    <property type="taxonomic scope" value="Bacteria"/>
</dbReference>
<dbReference type="InParanoid" id="Q9X1W3"/>
<dbReference type="OrthoDB" id="9777067at2"/>
<dbReference type="UniPathway" id="UPA00087">
    <property type="reaction ID" value="UER00172"/>
</dbReference>
<dbReference type="Proteomes" id="UP000008183">
    <property type="component" value="Chromosome"/>
</dbReference>
<dbReference type="GO" id="GO:0005737">
    <property type="term" value="C:cytoplasm"/>
    <property type="evidence" value="ECO:0000318"/>
    <property type="project" value="GO_Central"/>
</dbReference>
<dbReference type="GO" id="GO:0002189">
    <property type="term" value="C:ribose phosphate diphosphokinase complex"/>
    <property type="evidence" value="ECO:0000318"/>
    <property type="project" value="GO_Central"/>
</dbReference>
<dbReference type="GO" id="GO:0005524">
    <property type="term" value="F:ATP binding"/>
    <property type="evidence" value="ECO:0007669"/>
    <property type="project" value="UniProtKB-KW"/>
</dbReference>
<dbReference type="GO" id="GO:0016301">
    <property type="term" value="F:kinase activity"/>
    <property type="evidence" value="ECO:0007669"/>
    <property type="project" value="UniProtKB-KW"/>
</dbReference>
<dbReference type="GO" id="GO:0000287">
    <property type="term" value="F:magnesium ion binding"/>
    <property type="evidence" value="ECO:0007669"/>
    <property type="project" value="UniProtKB-UniRule"/>
</dbReference>
<dbReference type="GO" id="GO:0004749">
    <property type="term" value="F:ribose phosphate diphosphokinase activity"/>
    <property type="evidence" value="ECO:0000318"/>
    <property type="project" value="GO_Central"/>
</dbReference>
<dbReference type="GO" id="GO:0006015">
    <property type="term" value="P:5-phosphoribose 1-diphosphate biosynthetic process"/>
    <property type="evidence" value="ECO:0000318"/>
    <property type="project" value="GO_Central"/>
</dbReference>
<dbReference type="GO" id="GO:0006164">
    <property type="term" value="P:purine nucleotide biosynthetic process"/>
    <property type="evidence" value="ECO:0000318"/>
    <property type="project" value="GO_Central"/>
</dbReference>
<dbReference type="GO" id="GO:0009156">
    <property type="term" value="P:ribonucleoside monophosphate biosynthetic process"/>
    <property type="evidence" value="ECO:0007669"/>
    <property type="project" value="InterPro"/>
</dbReference>
<dbReference type="CDD" id="cd06223">
    <property type="entry name" value="PRTases_typeI"/>
    <property type="match status" value="1"/>
</dbReference>
<dbReference type="FunFam" id="3.40.50.2020:FF:000001">
    <property type="entry name" value="Ribose-phosphate pyrophosphokinase"/>
    <property type="match status" value="1"/>
</dbReference>
<dbReference type="Gene3D" id="3.40.50.2020">
    <property type="match status" value="2"/>
</dbReference>
<dbReference type="HAMAP" id="MF_00583_B">
    <property type="entry name" value="RibP_PPkinase_B"/>
    <property type="match status" value="1"/>
</dbReference>
<dbReference type="InterPro" id="IPR000842">
    <property type="entry name" value="PRib_PP_synth_CS"/>
</dbReference>
<dbReference type="InterPro" id="IPR029099">
    <property type="entry name" value="Pribosyltran_N"/>
</dbReference>
<dbReference type="InterPro" id="IPR000836">
    <property type="entry name" value="PRibTrfase_dom"/>
</dbReference>
<dbReference type="InterPro" id="IPR029057">
    <property type="entry name" value="PRTase-like"/>
</dbReference>
<dbReference type="InterPro" id="IPR005946">
    <property type="entry name" value="Rib-P_diPkinase"/>
</dbReference>
<dbReference type="InterPro" id="IPR037515">
    <property type="entry name" value="Rib-P_diPkinase_bac"/>
</dbReference>
<dbReference type="NCBIfam" id="NF002320">
    <property type="entry name" value="PRK01259.1"/>
    <property type="match status" value="1"/>
</dbReference>
<dbReference type="NCBIfam" id="TIGR01251">
    <property type="entry name" value="ribP_PPkin"/>
    <property type="match status" value="1"/>
</dbReference>
<dbReference type="PANTHER" id="PTHR10210">
    <property type="entry name" value="RIBOSE-PHOSPHATE DIPHOSPHOKINASE FAMILY MEMBER"/>
    <property type="match status" value="1"/>
</dbReference>
<dbReference type="PANTHER" id="PTHR10210:SF41">
    <property type="entry name" value="RIBOSE-PHOSPHATE PYROPHOSPHOKINASE 1, CHLOROPLASTIC"/>
    <property type="match status" value="1"/>
</dbReference>
<dbReference type="Pfam" id="PF14572">
    <property type="entry name" value="Pribosyl_synth"/>
    <property type="match status" value="1"/>
</dbReference>
<dbReference type="Pfam" id="PF13793">
    <property type="entry name" value="Pribosyltran_N"/>
    <property type="match status" value="1"/>
</dbReference>
<dbReference type="SMART" id="SM01400">
    <property type="entry name" value="Pribosyltran_N"/>
    <property type="match status" value="1"/>
</dbReference>
<dbReference type="SUPFAM" id="SSF53271">
    <property type="entry name" value="PRTase-like"/>
    <property type="match status" value="1"/>
</dbReference>
<dbReference type="PROSITE" id="PS00114">
    <property type="entry name" value="PRPP_SYNTHASE"/>
    <property type="match status" value="1"/>
</dbReference>
<keyword id="KW-0067">ATP-binding</keyword>
<keyword id="KW-0963">Cytoplasm</keyword>
<keyword id="KW-0418">Kinase</keyword>
<keyword id="KW-0460">Magnesium</keyword>
<keyword id="KW-0479">Metal-binding</keyword>
<keyword id="KW-0545">Nucleotide biosynthesis</keyword>
<keyword id="KW-0547">Nucleotide-binding</keyword>
<keyword id="KW-1185">Reference proteome</keyword>
<keyword id="KW-0808">Transferase</keyword>
<accession>Q9X1W3</accession>
<proteinExistence type="inferred from homology"/>
<reference key="1">
    <citation type="journal article" date="1999" name="Nature">
        <title>Evidence for lateral gene transfer between Archaea and Bacteria from genome sequence of Thermotoga maritima.</title>
        <authorList>
            <person name="Nelson K.E."/>
            <person name="Clayton R.A."/>
            <person name="Gill S.R."/>
            <person name="Gwinn M.L."/>
            <person name="Dodson R.J."/>
            <person name="Haft D.H."/>
            <person name="Hickey E.K."/>
            <person name="Peterson J.D."/>
            <person name="Nelson W.C."/>
            <person name="Ketchum K.A."/>
            <person name="McDonald L.A."/>
            <person name="Utterback T.R."/>
            <person name="Malek J.A."/>
            <person name="Linher K.D."/>
            <person name="Garrett M.M."/>
            <person name="Stewart A.M."/>
            <person name="Cotton M.D."/>
            <person name="Pratt M.S."/>
            <person name="Phillips C.A."/>
            <person name="Richardson D.L."/>
            <person name="Heidelberg J.F."/>
            <person name="Sutton G.G."/>
            <person name="Fleischmann R.D."/>
            <person name="Eisen J.A."/>
            <person name="White O."/>
            <person name="Salzberg S.L."/>
            <person name="Smith H.O."/>
            <person name="Venter J.C."/>
            <person name="Fraser C.M."/>
        </authorList>
    </citation>
    <scope>NUCLEOTIDE SEQUENCE [LARGE SCALE GENOMIC DNA]</scope>
    <source>
        <strain>ATCC 43589 / DSM 3109 / JCM 10099 / NBRC 100826 / MSB8</strain>
    </source>
</reference>
<sequence length="315" mass="34952">MSFSNEMKVFSGNANRPLAEKIANYLNLQLGDCEVGRFADGEINVRINETVRGHDIFLIQPTSPPVNENLMELLIMIDAFKRASANTIAVVIPYYGYARQDRKAKGRDPISAKLVANLITVAGATRVLTVDLHAEQIQGFFDIPVDNLWSYPVFAEELLKRENIVPEETVVVSPDVGGVRRARRMAERLGTSLAILDKRRPSDNVAEVVNIIGEVEDKVVIMFDDIIDTAHSIVKGAEALKNAGAKRIIACATHGVFSDRALERIENSSIDTVYITDTIYHENLPEKVKVISVANLIGEAIMRIRKHLSVSTLFR</sequence>
<evidence type="ECO:0000255" key="1">
    <source>
        <dbReference type="HAMAP-Rule" id="MF_00583"/>
    </source>
</evidence>
<organism>
    <name type="scientific">Thermotoga maritima (strain ATCC 43589 / DSM 3109 / JCM 10099 / NBRC 100826 / MSB8)</name>
    <dbReference type="NCBI Taxonomy" id="243274"/>
    <lineage>
        <taxon>Bacteria</taxon>
        <taxon>Thermotogati</taxon>
        <taxon>Thermotogota</taxon>
        <taxon>Thermotogae</taxon>
        <taxon>Thermotogales</taxon>
        <taxon>Thermotogaceae</taxon>
        <taxon>Thermotoga</taxon>
    </lineage>
</organism>